<accession>Q04G63</accession>
<organism>
    <name type="scientific">Oenococcus oeni (strain ATCC BAA-331 / PSU-1)</name>
    <dbReference type="NCBI Taxonomy" id="203123"/>
    <lineage>
        <taxon>Bacteria</taxon>
        <taxon>Bacillati</taxon>
        <taxon>Bacillota</taxon>
        <taxon>Bacilli</taxon>
        <taxon>Lactobacillales</taxon>
        <taxon>Lactobacillaceae</taxon>
        <taxon>Oenococcus</taxon>
    </lineage>
</organism>
<dbReference type="EMBL" id="CP000411">
    <property type="protein sequence ID" value="ABJ56559.1"/>
    <property type="molecule type" value="Genomic_DNA"/>
</dbReference>
<dbReference type="RefSeq" id="WP_011677525.1">
    <property type="nucleotide sequence ID" value="NC_008528.1"/>
</dbReference>
<dbReference type="SMR" id="Q04G63"/>
<dbReference type="STRING" id="203123.OEOE_0617"/>
<dbReference type="GeneID" id="75065439"/>
<dbReference type="KEGG" id="ooe:OEOE_0617"/>
<dbReference type="eggNOG" id="COG0257">
    <property type="taxonomic scope" value="Bacteria"/>
</dbReference>
<dbReference type="HOGENOM" id="CLU_135723_6_2_9"/>
<dbReference type="Proteomes" id="UP000000774">
    <property type="component" value="Chromosome"/>
</dbReference>
<dbReference type="GO" id="GO:0005737">
    <property type="term" value="C:cytoplasm"/>
    <property type="evidence" value="ECO:0007669"/>
    <property type="project" value="UniProtKB-ARBA"/>
</dbReference>
<dbReference type="GO" id="GO:1990904">
    <property type="term" value="C:ribonucleoprotein complex"/>
    <property type="evidence" value="ECO:0007669"/>
    <property type="project" value="UniProtKB-KW"/>
</dbReference>
<dbReference type="GO" id="GO:0005840">
    <property type="term" value="C:ribosome"/>
    <property type="evidence" value="ECO:0007669"/>
    <property type="project" value="UniProtKB-KW"/>
</dbReference>
<dbReference type="GO" id="GO:0003735">
    <property type="term" value="F:structural constituent of ribosome"/>
    <property type="evidence" value="ECO:0007669"/>
    <property type="project" value="InterPro"/>
</dbReference>
<dbReference type="GO" id="GO:0006412">
    <property type="term" value="P:translation"/>
    <property type="evidence" value="ECO:0007669"/>
    <property type="project" value="UniProtKB-UniRule"/>
</dbReference>
<dbReference type="HAMAP" id="MF_00251">
    <property type="entry name" value="Ribosomal_bL36"/>
    <property type="match status" value="1"/>
</dbReference>
<dbReference type="InterPro" id="IPR000473">
    <property type="entry name" value="Ribosomal_bL36"/>
</dbReference>
<dbReference type="InterPro" id="IPR035977">
    <property type="entry name" value="Ribosomal_bL36_sp"/>
</dbReference>
<dbReference type="NCBIfam" id="TIGR01022">
    <property type="entry name" value="rpmJ_bact"/>
    <property type="match status" value="1"/>
</dbReference>
<dbReference type="PANTHER" id="PTHR42888">
    <property type="entry name" value="50S RIBOSOMAL PROTEIN L36, CHLOROPLASTIC"/>
    <property type="match status" value="1"/>
</dbReference>
<dbReference type="PANTHER" id="PTHR42888:SF1">
    <property type="entry name" value="LARGE RIBOSOMAL SUBUNIT PROTEIN BL36C"/>
    <property type="match status" value="1"/>
</dbReference>
<dbReference type="Pfam" id="PF00444">
    <property type="entry name" value="Ribosomal_L36"/>
    <property type="match status" value="1"/>
</dbReference>
<dbReference type="SUPFAM" id="SSF57840">
    <property type="entry name" value="Ribosomal protein L36"/>
    <property type="match status" value="1"/>
</dbReference>
<dbReference type="PROSITE" id="PS00828">
    <property type="entry name" value="RIBOSOMAL_L36"/>
    <property type="match status" value="1"/>
</dbReference>
<protein>
    <recommendedName>
        <fullName evidence="1">Large ribosomal subunit protein bL36</fullName>
    </recommendedName>
    <alternativeName>
        <fullName evidence="2">50S ribosomal protein L36</fullName>
    </alternativeName>
</protein>
<feature type="chain" id="PRO_0000302258" description="Large ribosomal subunit protein bL36">
    <location>
        <begin position="1"/>
        <end position="39"/>
    </location>
</feature>
<sequence>MKVRPSVKPMCDQCRVIKRNGRVMVICSANPKHKQRQGK</sequence>
<gene>
    <name evidence="1" type="primary">rpmJ</name>
    <name type="ordered locus">OEOE_0617</name>
</gene>
<proteinExistence type="inferred from homology"/>
<reference key="1">
    <citation type="journal article" date="2006" name="Proc. Natl. Acad. Sci. U.S.A.">
        <title>Comparative genomics of the lactic acid bacteria.</title>
        <authorList>
            <person name="Makarova K.S."/>
            <person name="Slesarev A."/>
            <person name="Wolf Y.I."/>
            <person name="Sorokin A."/>
            <person name="Mirkin B."/>
            <person name="Koonin E.V."/>
            <person name="Pavlov A."/>
            <person name="Pavlova N."/>
            <person name="Karamychev V."/>
            <person name="Polouchine N."/>
            <person name="Shakhova V."/>
            <person name="Grigoriev I."/>
            <person name="Lou Y."/>
            <person name="Rohksar D."/>
            <person name="Lucas S."/>
            <person name="Huang K."/>
            <person name="Goodstein D.M."/>
            <person name="Hawkins T."/>
            <person name="Plengvidhya V."/>
            <person name="Welker D."/>
            <person name="Hughes J."/>
            <person name="Goh Y."/>
            <person name="Benson A."/>
            <person name="Baldwin K."/>
            <person name="Lee J.-H."/>
            <person name="Diaz-Muniz I."/>
            <person name="Dosti B."/>
            <person name="Smeianov V."/>
            <person name="Wechter W."/>
            <person name="Barabote R."/>
            <person name="Lorca G."/>
            <person name="Altermann E."/>
            <person name="Barrangou R."/>
            <person name="Ganesan B."/>
            <person name="Xie Y."/>
            <person name="Rawsthorne H."/>
            <person name="Tamir D."/>
            <person name="Parker C."/>
            <person name="Breidt F."/>
            <person name="Broadbent J.R."/>
            <person name="Hutkins R."/>
            <person name="O'Sullivan D."/>
            <person name="Steele J."/>
            <person name="Unlu G."/>
            <person name="Saier M.H. Jr."/>
            <person name="Klaenhammer T."/>
            <person name="Richardson P."/>
            <person name="Kozyavkin S."/>
            <person name="Weimer B.C."/>
            <person name="Mills D.A."/>
        </authorList>
    </citation>
    <scope>NUCLEOTIDE SEQUENCE [LARGE SCALE GENOMIC DNA]</scope>
    <source>
        <strain>ATCC BAA-331 / PSU-1</strain>
    </source>
</reference>
<evidence type="ECO:0000255" key="1">
    <source>
        <dbReference type="HAMAP-Rule" id="MF_00251"/>
    </source>
</evidence>
<evidence type="ECO:0000305" key="2"/>
<comment type="similarity">
    <text evidence="1">Belongs to the bacterial ribosomal protein bL36 family.</text>
</comment>
<name>RL36_OENOB</name>
<keyword id="KW-1185">Reference proteome</keyword>
<keyword id="KW-0687">Ribonucleoprotein</keyword>
<keyword id="KW-0689">Ribosomal protein</keyword>